<reference key="1">
    <citation type="journal article" date="2006" name="J. Bacteriol.">
        <title>Pathogenomic sequence analysis of Bacillus cereus and Bacillus thuringiensis isolates closely related to Bacillus anthracis.</title>
        <authorList>
            <person name="Han C.S."/>
            <person name="Xie G."/>
            <person name="Challacombe J.F."/>
            <person name="Altherr M.R."/>
            <person name="Bhotika S.S."/>
            <person name="Bruce D."/>
            <person name="Campbell C.S."/>
            <person name="Campbell M.L."/>
            <person name="Chen J."/>
            <person name="Chertkov O."/>
            <person name="Cleland C."/>
            <person name="Dimitrijevic M."/>
            <person name="Doggett N.A."/>
            <person name="Fawcett J.J."/>
            <person name="Glavina T."/>
            <person name="Goodwin L.A."/>
            <person name="Hill K.K."/>
            <person name="Hitchcock P."/>
            <person name="Jackson P.J."/>
            <person name="Keim P."/>
            <person name="Kewalramani A.R."/>
            <person name="Longmire J."/>
            <person name="Lucas S."/>
            <person name="Malfatti S."/>
            <person name="McMurry K."/>
            <person name="Meincke L.J."/>
            <person name="Misra M."/>
            <person name="Moseman B.L."/>
            <person name="Mundt M."/>
            <person name="Munk A.C."/>
            <person name="Okinaka R.T."/>
            <person name="Parson-Quintana B."/>
            <person name="Reilly L.P."/>
            <person name="Richardson P."/>
            <person name="Robinson D.L."/>
            <person name="Rubin E."/>
            <person name="Saunders E."/>
            <person name="Tapia R."/>
            <person name="Tesmer J.G."/>
            <person name="Thayer N."/>
            <person name="Thompson L.S."/>
            <person name="Tice H."/>
            <person name="Ticknor L.O."/>
            <person name="Wills P.L."/>
            <person name="Brettin T.S."/>
            <person name="Gilna P."/>
        </authorList>
    </citation>
    <scope>NUCLEOTIDE SEQUENCE [LARGE SCALE GENOMIC DNA]</scope>
    <source>
        <strain>ZK / E33L</strain>
    </source>
</reference>
<accession>Q63GR1</accession>
<name>GATC_BACCZ</name>
<sequence length="96" mass="10866">MSRISVENVKHVAHLARLAITDQEAEKFQKQLDAIVTFAEQLNELDTTDVKPTTHVLTMKNVMREDVPEKGLPVEEVLKNAPDHKDNQIRVPAVLE</sequence>
<organism>
    <name type="scientific">Bacillus cereus (strain ZK / E33L)</name>
    <dbReference type="NCBI Taxonomy" id="288681"/>
    <lineage>
        <taxon>Bacteria</taxon>
        <taxon>Bacillati</taxon>
        <taxon>Bacillota</taxon>
        <taxon>Bacilli</taxon>
        <taxon>Bacillales</taxon>
        <taxon>Bacillaceae</taxon>
        <taxon>Bacillus</taxon>
        <taxon>Bacillus cereus group</taxon>
    </lineage>
</organism>
<dbReference type="EC" id="6.3.5.-" evidence="1"/>
<dbReference type="EMBL" id="CP000001">
    <property type="protein sequence ID" value="AAU19948.1"/>
    <property type="molecule type" value="Genomic_DNA"/>
</dbReference>
<dbReference type="RefSeq" id="WP_000086999.1">
    <property type="nucleotide sequence ID" value="NZ_CP009968.1"/>
</dbReference>
<dbReference type="SMR" id="Q63GR1"/>
<dbReference type="GeneID" id="93010705"/>
<dbReference type="KEGG" id="bcz:BCE33L0291"/>
<dbReference type="PATRIC" id="fig|288681.22.peg.5315"/>
<dbReference type="Proteomes" id="UP000002612">
    <property type="component" value="Chromosome"/>
</dbReference>
<dbReference type="GO" id="GO:0050566">
    <property type="term" value="F:asparaginyl-tRNA synthase (glutamine-hydrolyzing) activity"/>
    <property type="evidence" value="ECO:0007669"/>
    <property type="project" value="RHEA"/>
</dbReference>
<dbReference type="GO" id="GO:0005524">
    <property type="term" value="F:ATP binding"/>
    <property type="evidence" value="ECO:0007669"/>
    <property type="project" value="UniProtKB-KW"/>
</dbReference>
<dbReference type="GO" id="GO:0050567">
    <property type="term" value="F:glutaminyl-tRNA synthase (glutamine-hydrolyzing) activity"/>
    <property type="evidence" value="ECO:0007669"/>
    <property type="project" value="UniProtKB-UniRule"/>
</dbReference>
<dbReference type="GO" id="GO:0070681">
    <property type="term" value="P:glutaminyl-tRNAGln biosynthesis via transamidation"/>
    <property type="evidence" value="ECO:0007669"/>
    <property type="project" value="TreeGrafter"/>
</dbReference>
<dbReference type="GO" id="GO:0006450">
    <property type="term" value="P:regulation of translational fidelity"/>
    <property type="evidence" value="ECO:0007669"/>
    <property type="project" value="InterPro"/>
</dbReference>
<dbReference type="GO" id="GO:0006412">
    <property type="term" value="P:translation"/>
    <property type="evidence" value="ECO:0007669"/>
    <property type="project" value="UniProtKB-UniRule"/>
</dbReference>
<dbReference type="Gene3D" id="1.10.20.60">
    <property type="entry name" value="Glu-tRNAGln amidotransferase C subunit, N-terminal domain"/>
    <property type="match status" value="1"/>
</dbReference>
<dbReference type="HAMAP" id="MF_00122">
    <property type="entry name" value="GatC"/>
    <property type="match status" value="1"/>
</dbReference>
<dbReference type="InterPro" id="IPR036113">
    <property type="entry name" value="Asp/Glu-ADT_sf_sub_c"/>
</dbReference>
<dbReference type="InterPro" id="IPR003837">
    <property type="entry name" value="GatC"/>
</dbReference>
<dbReference type="NCBIfam" id="TIGR00135">
    <property type="entry name" value="gatC"/>
    <property type="match status" value="1"/>
</dbReference>
<dbReference type="PANTHER" id="PTHR15004">
    <property type="entry name" value="GLUTAMYL-TRNA(GLN) AMIDOTRANSFERASE SUBUNIT C, MITOCHONDRIAL"/>
    <property type="match status" value="1"/>
</dbReference>
<dbReference type="PANTHER" id="PTHR15004:SF0">
    <property type="entry name" value="GLUTAMYL-TRNA(GLN) AMIDOTRANSFERASE SUBUNIT C, MITOCHONDRIAL"/>
    <property type="match status" value="1"/>
</dbReference>
<dbReference type="Pfam" id="PF02686">
    <property type="entry name" value="GatC"/>
    <property type="match status" value="1"/>
</dbReference>
<dbReference type="SUPFAM" id="SSF141000">
    <property type="entry name" value="Glu-tRNAGln amidotransferase C subunit"/>
    <property type="match status" value="1"/>
</dbReference>
<comment type="function">
    <text evidence="1">Allows the formation of correctly charged Asn-tRNA(Asn) or Gln-tRNA(Gln) through the transamidation of misacylated Asp-tRNA(Asn) or Glu-tRNA(Gln) in organisms which lack either or both of asparaginyl-tRNA or glutaminyl-tRNA synthetases. The reaction takes place in the presence of glutamine and ATP through an activated phospho-Asp-tRNA(Asn) or phospho-Glu-tRNA(Gln).</text>
</comment>
<comment type="catalytic activity">
    <reaction evidence="1">
        <text>L-glutamyl-tRNA(Gln) + L-glutamine + ATP + H2O = L-glutaminyl-tRNA(Gln) + L-glutamate + ADP + phosphate + H(+)</text>
        <dbReference type="Rhea" id="RHEA:17521"/>
        <dbReference type="Rhea" id="RHEA-COMP:9681"/>
        <dbReference type="Rhea" id="RHEA-COMP:9684"/>
        <dbReference type="ChEBI" id="CHEBI:15377"/>
        <dbReference type="ChEBI" id="CHEBI:15378"/>
        <dbReference type="ChEBI" id="CHEBI:29985"/>
        <dbReference type="ChEBI" id="CHEBI:30616"/>
        <dbReference type="ChEBI" id="CHEBI:43474"/>
        <dbReference type="ChEBI" id="CHEBI:58359"/>
        <dbReference type="ChEBI" id="CHEBI:78520"/>
        <dbReference type="ChEBI" id="CHEBI:78521"/>
        <dbReference type="ChEBI" id="CHEBI:456216"/>
    </reaction>
</comment>
<comment type="catalytic activity">
    <reaction evidence="1">
        <text>L-aspartyl-tRNA(Asn) + L-glutamine + ATP + H2O = L-asparaginyl-tRNA(Asn) + L-glutamate + ADP + phosphate + 2 H(+)</text>
        <dbReference type="Rhea" id="RHEA:14513"/>
        <dbReference type="Rhea" id="RHEA-COMP:9674"/>
        <dbReference type="Rhea" id="RHEA-COMP:9677"/>
        <dbReference type="ChEBI" id="CHEBI:15377"/>
        <dbReference type="ChEBI" id="CHEBI:15378"/>
        <dbReference type="ChEBI" id="CHEBI:29985"/>
        <dbReference type="ChEBI" id="CHEBI:30616"/>
        <dbReference type="ChEBI" id="CHEBI:43474"/>
        <dbReference type="ChEBI" id="CHEBI:58359"/>
        <dbReference type="ChEBI" id="CHEBI:78515"/>
        <dbReference type="ChEBI" id="CHEBI:78516"/>
        <dbReference type="ChEBI" id="CHEBI:456216"/>
    </reaction>
</comment>
<comment type="subunit">
    <text evidence="1">Heterotrimer of A, B and C subunits.</text>
</comment>
<comment type="similarity">
    <text evidence="1">Belongs to the GatC family.</text>
</comment>
<evidence type="ECO:0000255" key="1">
    <source>
        <dbReference type="HAMAP-Rule" id="MF_00122"/>
    </source>
</evidence>
<gene>
    <name evidence="1" type="primary">gatC</name>
    <name type="ordered locus">BCE33L0291</name>
</gene>
<proteinExistence type="inferred from homology"/>
<feature type="chain" id="PRO_1000016069" description="Aspartyl/glutamyl-tRNA(Asn/Gln) amidotransferase subunit C">
    <location>
        <begin position="1"/>
        <end position="96"/>
    </location>
</feature>
<keyword id="KW-0067">ATP-binding</keyword>
<keyword id="KW-0436">Ligase</keyword>
<keyword id="KW-0547">Nucleotide-binding</keyword>
<keyword id="KW-0648">Protein biosynthesis</keyword>
<protein>
    <recommendedName>
        <fullName evidence="1">Aspartyl/glutamyl-tRNA(Asn/Gln) amidotransferase subunit C</fullName>
        <shortName evidence="1">Asp/Glu-ADT subunit C</shortName>
        <ecNumber evidence="1">6.3.5.-</ecNumber>
    </recommendedName>
</protein>